<feature type="chain" id="PRO_0000457191" description="OPG024 protein">
    <location>
        <begin position="1"/>
        <end position="64"/>
    </location>
</feature>
<feature type="region of interest" description="Disordered" evidence="1">
    <location>
        <begin position="1"/>
        <end position="64"/>
    </location>
</feature>
<feature type="compositionally biased region" description="Low complexity" evidence="1">
    <location>
        <begin position="23"/>
        <end position="34"/>
    </location>
</feature>
<feature type="compositionally biased region" description="Gly residues" evidence="1">
    <location>
        <begin position="49"/>
        <end position="64"/>
    </location>
</feature>
<evidence type="ECO:0000256" key="1">
    <source>
        <dbReference type="SAM" id="MobiDB-lite"/>
    </source>
</evidence>
<evidence type="ECO:0000305" key="2"/>
<gene>
    <name type="primary">OPG023</name>
    <name type="ORF">MPXVgp011</name>
</gene>
<organismHost>
    <name type="scientific">Cynomys gunnisoni</name>
    <name type="common">Gunnison's prairie dog</name>
    <name type="synonym">Spermophilus gunnisoni</name>
    <dbReference type="NCBI Taxonomy" id="45479"/>
</organismHost>
<organismHost>
    <name type="scientific">Cynomys leucurus</name>
    <name type="common">White-tailed prairie dog</name>
    <dbReference type="NCBI Taxonomy" id="99825"/>
</organismHost>
<organismHost>
    <name type="scientific">Cynomys ludovicianus</name>
    <name type="common">Black-tailed prairie dog</name>
    <dbReference type="NCBI Taxonomy" id="45480"/>
</organismHost>
<organismHost>
    <name type="scientific">Cynomys mexicanus</name>
    <name type="common">Mexican prairie dog</name>
    <dbReference type="NCBI Taxonomy" id="99826"/>
</organismHost>
<organismHost>
    <name type="scientific">Cynomys parvidens</name>
    <name type="common">Utah prairie dog</name>
    <dbReference type="NCBI Taxonomy" id="99827"/>
</organismHost>
<organismHost>
    <name type="scientific">Gliridae</name>
    <name type="common">dormice</name>
    <dbReference type="NCBI Taxonomy" id="30650"/>
</organismHost>
<organismHost>
    <name type="scientific">Heliosciurus ruwenzorii</name>
    <name type="common">Ruwenzori sun squirrel</name>
    <dbReference type="NCBI Taxonomy" id="226685"/>
</organismHost>
<organismHost>
    <name type="scientific">Homo sapiens</name>
    <name type="common">Human</name>
    <dbReference type="NCBI Taxonomy" id="9606"/>
</organismHost>
<organismHost>
    <name type="scientific">Mus musculus</name>
    <name type="common">Mouse</name>
    <dbReference type="NCBI Taxonomy" id="10090"/>
</organismHost>
<accession>A0A7H0DN00</accession>
<name>PG024_MONPV</name>
<comment type="similarity">
    <text evidence="2">Belongs to the orthopoxvirus OPG024 family.</text>
</comment>
<keyword id="KW-1185">Reference proteome</keyword>
<protein>
    <recommendedName>
        <fullName>OPG024 protein</fullName>
    </recommendedName>
</protein>
<organism>
    <name type="scientific">Monkeypox virus</name>
    <dbReference type="NCBI Taxonomy" id="10244"/>
    <lineage>
        <taxon>Viruses</taxon>
        <taxon>Varidnaviria</taxon>
        <taxon>Bamfordvirae</taxon>
        <taxon>Nucleocytoviricota</taxon>
        <taxon>Pokkesviricetes</taxon>
        <taxon>Chitovirales</taxon>
        <taxon>Poxviridae</taxon>
        <taxon>Chordopoxvirinae</taxon>
        <taxon>Orthopoxvirus</taxon>
    </lineage>
</organism>
<reference key="1">
    <citation type="journal article" date="2022" name="J. Infect. Dis.">
        <title>Exportation of Monkeypox virus from the African continent.</title>
        <authorList>
            <person name="Mauldin M.R."/>
            <person name="McCollum A.M."/>
            <person name="Nakazawa Y.J."/>
            <person name="Mandra A."/>
            <person name="Whitehouse E.R."/>
            <person name="Davidson W."/>
            <person name="Zhao H."/>
            <person name="Gao J."/>
            <person name="Li Y."/>
            <person name="Doty J."/>
            <person name="Yinka-Ogunleye A."/>
            <person name="Akinpelu A."/>
            <person name="Aruna O."/>
            <person name="Naidoo D."/>
            <person name="Lewandowski K."/>
            <person name="Afrough B."/>
            <person name="Graham V."/>
            <person name="Aarons E."/>
            <person name="Hewson R."/>
            <person name="Vipond R."/>
            <person name="Dunning J."/>
            <person name="Chand M."/>
            <person name="Brown C."/>
            <person name="Cohen-Gihon I."/>
            <person name="Erez N."/>
            <person name="Shifman O."/>
            <person name="Israeli O."/>
            <person name="Sharon M."/>
            <person name="Schwartz E."/>
            <person name="Beth-Din A."/>
            <person name="Zvi A."/>
            <person name="Mak T.M."/>
            <person name="Ng Y.K."/>
            <person name="Cui L."/>
            <person name="Lin R.T.P."/>
            <person name="Olson V.A."/>
            <person name="Brooks T."/>
            <person name="Paran N."/>
            <person name="Ihekweazu C."/>
            <person name="Reynolds M.G."/>
        </authorList>
    </citation>
    <scope>NUCLEOTIDE SEQUENCE [LARGE SCALE GENOMIC DNA]</scope>
    <source>
        <strain>MPXV-M5312_HM12_Rivers</strain>
    </source>
</reference>
<proteinExistence type="inferred from homology"/>
<sequence length="64" mass="6068">MSSKGGSSGGMWSVFIHGHDGSNKGSKTYTSSGSGMWGGGSSSGVKSGVNGGVNGGVKSGTGKI</sequence>
<dbReference type="EMBL" id="MT903340">
    <property type="protein sequence ID" value="QNP12883.1"/>
    <property type="molecule type" value="Genomic_DNA"/>
</dbReference>
<dbReference type="Proteomes" id="UP000516359">
    <property type="component" value="Genome"/>
</dbReference>
<dbReference type="InterPro" id="IPR009748">
    <property type="entry name" value="Orthopox_C10L"/>
</dbReference>
<dbReference type="Pfam" id="PF07020">
    <property type="entry name" value="Orthopox_C10L"/>
    <property type="match status" value="1"/>
</dbReference>